<proteinExistence type="inferred from homology"/>
<protein>
    <recommendedName>
        <fullName evidence="1">Thymidylate kinase</fullName>
        <ecNumber evidence="1">2.7.4.9</ecNumber>
    </recommendedName>
    <alternativeName>
        <fullName evidence="1">dTMP kinase</fullName>
    </alternativeName>
</protein>
<accession>B3W9Y8</accession>
<sequence>MTGTFITFEGPDGAGKTSVLKTLIPQLEQHVRVPLHLTREPGGAKISETIREVILDPANTAMDARTEALLYAASRRQHLVEVIQPALAQGDIVVCDRFVDSSVAYQGGGREIGPDAVLKMNQFATAGLEPALTLYLDVPVQVGLDRIKSHQNERQYDRLDQESLAFHERVHDAYMTLIVDNPQRIVSIDATEPLEKVVAACFQTITRRFPELFN</sequence>
<comment type="function">
    <text evidence="1">Phosphorylation of dTMP to form dTDP in both de novo and salvage pathways of dTTP synthesis.</text>
</comment>
<comment type="catalytic activity">
    <reaction evidence="1">
        <text>dTMP + ATP = dTDP + ADP</text>
        <dbReference type="Rhea" id="RHEA:13517"/>
        <dbReference type="ChEBI" id="CHEBI:30616"/>
        <dbReference type="ChEBI" id="CHEBI:58369"/>
        <dbReference type="ChEBI" id="CHEBI:63528"/>
        <dbReference type="ChEBI" id="CHEBI:456216"/>
        <dbReference type="EC" id="2.7.4.9"/>
    </reaction>
</comment>
<comment type="similarity">
    <text evidence="1">Belongs to the thymidylate kinase family.</text>
</comment>
<dbReference type="EC" id="2.7.4.9" evidence="1"/>
<dbReference type="EMBL" id="FM177140">
    <property type="protein sequence ID" value="CAQ67507.1"/>
    <property type="molecule type" value="Genomic_DNA"/>
</dbReference>
<dbReference type="SMR" id="B3W9Y8"/>
<dbReference type="KEGG" id="lcb:LCABL_24410"/>
<dbReference type="HOGENOM" id="CLU_049131_0_2_9"/>
<dbReference type="GO" id="GO:0005829">
    <property type="term" value="C:cytosol"/>
    <property type="evidence" value="ECO:0007669"/>
    <property type="project" value="TreeGrafter"/>
</dbReference>
<dbReference type="GO" id="GO:0005524">
    <property type="term" value="F:ATP binding"/>
    <property type="evidence" value="ECO:0007669"/>
    <property type="project" value="UniProtKB-UniRule"/>
</dbReference>
<dbReference type="GO" id="GO:0004798">
    <property type="term" value="F:dTMP kinase activity"/>
    <property type="evidence" value="ECO:0007669"/>
    <property type="project" value="UniProtKB-UniRule"/>
</dbReference>
<dbReference type="GO" id="GO:0006233">
    <property type="term" value="P:dTDP biosynthetic process"/>
    <property type="evidence" value="ECO:0007669"/>
    <property type="project" value="InterPro"/>
</dbReference>
<dbReference type="GO" id="GO:0006235">
    <property type="term" value="P:dTTP biosynthetic process"/>
    <property type="evidence" value="ECO:0007669"/>
    <property type="project" value="UniProtKB-UniRule"/>
</dbReference>
<dbReference type="GO" id="GO:0006227">
    <property type="term" value="P:dUDP biosynthetic process"/>
    <property type="evidence" value="ECO:0007669"/>
    <property type="project" value="TreeGrafter"/>
</dbReference>
<dbReference type="CDD" id="cd01672">
    <property type="entry name" value="TMPK"/>
    <property type="match status" value="1"/>
</dbReference>
<dbReference type="FunFam" id="3.40.50.300:FF:000225">
    <property type="entry name" value="Thymidylate kinase"/>
    <property type="match status" value="1"/>
</dbReference>
<dbReference type="Gene3D" id="3.40.50.300">
    <property type="entry name" value="P-loop containing nucleotide triphosphate hydrolases"/>
    <property type="match status" value="1"/>
</dbReference>
<dbReference type="HAMAP" id="MF_00165">
    <property type="entry name" value="Thymidylate_kinase"/>
    <property type="match status" value="1"/>
</dbReference>
<dbReference type="InterPro" id="IPR027417">
    <property type="entry name" value="P-loop_NTPase"/>
</dbReference>
<dbReference type="InterPro" id="IPR039430">
    <property type="entry name" value="Thymidylate_kin-like_dom"/>
</dbReference>
<dbReference type="InterPro" id="IPR018095">
    <property type="entry name" value="Thymidylate_kin_CS"/>
</dbReference>
<dbReference type="InterPro" id="IPR018094">
    <property type="entry name" value="Thymidylate_kinase"/>
</dbReference>
<dbReference type="NCBIfam" id="TIGR00041">
    <property type="entry name" value="DTMP_kinase"/>
    <property type="match status" value="1"/>
</dbReference>
<dbReference type="PANTHER" id="PTHR10344">
    <property type="entry name" value="THYMIDYLATE KINASE"/>
    <property type="match status" value="1"/>
</dbReference>
<dbReference type="PANTHER" id="PTHR10344:SF4">
    <property type="entry name" value="UMP-CMP KINASE 2, MITOCHONDRIAL"/>
    <property type="match status" value="1"/>
</dbReference>
<dbReference type="Pfam" id="PF02223">
    <property type="entry name" value="Thymidylate_kin"/>
    <property type="match status" value="1"/>
</dbReference>
<dbReference type="SUPFAM" id="SSF52540">
    <property type="entry name" value="P-loop containing nucleoside triphosphate hydrolases"/>
    <property type="match status" value="1"/>
</dbReference>
<dbReference type="PROSITE" id="PS01331">
    <property type="entry name" value="THYMIDYLATE_KINASE"/>
    <property type="match status" value="1"/>
</dbReference>
<name>KTHY_LACCB</name>
<gene>
    <name evidence="1" type="primary">tmk</name>
    <name type="ordered locus">LCABL_24410</name>
</gene>
<feature type="chain" id="PRO_1000097406" description="Thymidylate kinase">
    <location>
        <begin position="1"/>
        <end position="214"/>
    </location>
</feature>
<feature type="binding site" evidence="1">
    <location>
        <begin position="10"/>
        <end position="17"/>
    </location>
    <ligand>
        <name>ATP</name>
        <dbReference type="ChEBI" id="CHEBI:30616"/>
    </ligand>
</feature>
<evidence type="ECO:0000255" key="1">
    <source>
        <dbReference type="HAMAP-Rule" id="MF_00165"/>
    </source>
</evidence>
<reference key="1">
    <citation type="submission" date="2008-06" db="EMBL/GenBank/DDBJ databases">
        <title>Lactobacillus casei BL23 complete genome sequence.</title>
        <authorList>
            <person name="Maze A."/>
            <person name="Boel G."/>
            <person name="Bourand A."/>
            <person name="Loux V."/>
            <person name="Gibrat J.F."/>
            <person name="Zuniga M."/>
            <person name="Hartke A."/>
            <person name="Deutscher J."/>
        </authorList>
    </citation>
    <scope>NUCLEOTIDE SEQUENCE [LARGE SCALE GENOMIC DNA]</scope>
    <source>
        <strain>BL23</strain>
    </source>
</reference>
<keyword id="KW-0067">ATP-binding</keyword>
<keyword id="KW-0418">Kinase</keyword>
<keyword id="KW-0545">Nucleotide biosynthesis</keyword>
<keyword id="KW-0547">Nucleotide-binding</keyword>
<keyword id="KW-0808">Transferase</keyword>
<organism>
    <name type="scientific">Lacticaseibacillus casei (strain BL23)</name>
    <name type="common">Lactobacillus casei</name>
    <dbReference type="NCBI Taxonomy" id="543734"/>
    <lineage>
        <taxon>Bacteria</taxon>
        <taxon>Bacillati</taxon>
        <taxon>Bacillota</taxon>
        <taxon>Bacilli</taxon>
        <taxon>Lactobacillales</taxon>
        <taxon>Lactobacillaceae</taxon>
        <taxon>Lacticaseibacillus</taxon>
    </lineage>
</organism>